<proteinExistence type="inferred from homology"/>
<dbReference type="EC" id="1.8.4.12" evidence="1"/>
<dbReference type="EMBL" id="AL591981">
    <property type="protein sequence ID" value="CAC99937.1"/>
    <property type="molecule type" value="Genomic_DNA"/>
</dbReference>
<dbReference type="PIR" id="AC1307">
    <property type="entry name" value="AC1307"/>
</dbReference>
<dbReference type="RefSeq" id="NP_465384.1">
    <property type="nucleotide sequence ID" value="NC_003210.1"/>
</dbReference>
<dbReference type="RefSeq" id="WP_010989828.1">
    <property type="nucleotide sequence ID" value="NZ_CP149495.1"/>
</dbReference>
<dbReference type="SMR" id="Q8Y641"/>
<dbReference type="STRING" id="169963.gene:17594544"/>
<dbReference type="PaxDb" id="169963-lmo1859"/>
<dbReference type="EnsemblBacteria" id="CAC99937">
    <property type="protein sequence ID" value="CAC99937"/>
    <property type="gene ID" value="CAC99937"/>
</dbReference>
<dbReference type="GeneID" id="985834"/>
<dbReference type="KEGG" id="lmo:lmo1859"/>
<dbReference type="PATRIC" id="fig|169963.11.peg.1904"/>
<dbReference type="eggNOG" id="COG0229">
    <property type="taxonomic scope" value="Bacteria"/>
</dbReference>
<dbReference type="HOGENOM" id="CLU_031040_8_5_9"/>
<dbReference type="OrthoDB" id="4174719at2"/>
<dbReference type="PhylomeDB" id="Q8Y641"/>
<dbReference type="BioCyc" id="LMON169963:LMO1859-MONOMER"/>
<dbReference type="Proteomes" id="UP000000817">
    <property type="component" value="Chromosome"/>
</dbReference>
<dbReference type="GO" id="GO:0005737">
    <property type="term" value="C:cytoplasm"/>
    <property type="evidence" value="ECO:0000318"/>
    <property type="project" value="GO_Central"/>
</dbReference>
<dbReference type="GO" id="GO:0033743">
    <property type="term" value="F:peptide-methionine (R)-S-oxide reductase activity"/>
    <property type="evidence" value="ECO:0000318"/>
    <property type="project" value="GO_Central"/>
</dbReference>
<dbReference type="GO" id="GO:0030091">
    <property type="term" value="P:protein repair"/>
    <property type="evidence" value="ECO:0007669"/>
    <property type="project" value="InterPro"/>
</dbReference>
<dbReference type="GO" id="GO:0006979">
    <property type="term" value="P:response to oxidative stress"/>
    <property type="evidence" value="ECO:0007669"/>
    <property type="project" value="InterPro"/>
</dbReference>
<dbReference type="FunFam" id="2.170.150.20:FF:000003">
    <property type="entry name" value="Peptide methionine sulfoxide reductase MsrB"/>
    <property type="match status" value="1"/>
</dbReference>
<dbReference type="Gene3D" id="2.170.150.20">
    <property type="entry name" value="Peptide methionine sulfoxide reductase"/>
    <property type="match status" value="1"/>
</dbReference>
<dbReference type="HAMAP" id="MF_01400">
    <property type="entry name" value="MsrB"/>
    <property type="match status" value="1"/>
</dbReference>
<dbReference type="InterPro" id="IPR028427">
    <property type="entry name" value="Met_Sox_Rdtase_MsrB"/>
</dbReference>
<dbReference type="InterPro" id="IPR002579">
    <property type="entry name" value="Met_Sox_Rdtase_MsrB_dom"/>
</dbReference>
<dbReference type="InterPro" id="IPR011057">
    <property type="entry name" value="Mss4-like_sf"/>
</dbReference>
<dbReference type="NCBIfam" id="TIGR00357">
    <property type="entry name" value="peptide-methionine (R)-S-oxide reductase MsrB"/>
    <property type="match status" value="1"/>
</dbReference>
<dbReference type="PANTHER" id="PTHR10173">
    <property type="entry name" value="METHIONINE SULFOXIDE REDUCTASE"/>
    <property type="match status" value="1"/>
</dbReference>
<dbReference type="PANTHER" id="PTHR10173:SF59">
    <property type="entry name" value="PEPTIDE METHIONINE SULFOXIDE REDUCTASE MSRA_MSRB"/>
    <property type="match status" value="1"/>
</dbReference>
<dbReference type="Pfam" id="PF01641">
    <property type="entry name" value="SelR"/>
    <property type="match status" value="1"/>
</dbReference>
<dbReference type="SUPFAM" id="SSF51316">
    <property type="entry name" value="Mss4-like"/>
    <property type="match status" value="1"/>
</dbReference>
<dbReference type="PROSITE" id="PS51790">
    <property type="entry name" value="MSRB"/>
    <property type="match status" value="1"/>
</dbReference>
<feature type="chain" id="PRO_0000140282" description="Peptide methionine sulfoxide reductase MsrB">
    <location>
        <begin position="1"/>
        <end position="145"/>
    </location>
</feature>
<feature type="domain" description="MsrB" evidence="2">
    <location>
        <begin position="6"/>
        <end position="129"/>
    </location>
</feature>
<feature type="active site" description="Nucleophile" evidence="2">
    <location>
        <position position="118"/>
    </location>
</feature>
<reference key="1">
    <citation type="journal article" date="2001" name="Science">
        <title>Comparative genomics of Listeria species.</title>
        <authorList>
            <person name="Glaser P."/>
            <person name="Frangeul L."/>
            <person name="Buchrieser C."/>
            <person name="Rusniok C."/>
            <person name="Amend A."/>
            <person name="Baquero F."/>
            <person name="Berche P."/>
            <person name="Bloecker H."/>
            <person name="Brandt P."/>
            <person name="Chakraborty T."/>
            <person name="Charbit A."/>
            <person name="Chetouani F."/>
            <person name="Couve E."/>
            <person name="de Daruvar A."/>
            <person name="Dehoux P."/>
            <person name="Domann E."/>
            <person name="Dominguez-Bernal G."/>
            <person name="Duchaud E."/>
            <person name="Durant L."/>
            <person name="Dussurget O."/>
            <person name="Entian K.-D."/>
            <person name="Fsihi H."/>
            <person name="Garcia-del Portillo F."/>
            <person name="Garrido P."/>
            <person name="Gautier L."/>
            <person name="Goebel W."/>
            <person name="Gomez-Lopez N."/>
            <person name="Hain T."/>
            <person name="Hauf J."/>
            <person name="Jackson D."/>
            <person name="Jones L.-M."/>
            <person name="Kaerst U."/>
            <person name="Kreft J."/>
            <person name="Kuhn M."/>
            <person name="Kunst F."/>
            <person name="Kurapkat G."/>
            <person name="Madueno E."/>
            <person name="Maitournam A."/>
            <person name="Mata Vicente J."/>
            <person name="Ng E."/>
            <person name="Nedjari H."/>
            <person name="Nordsiek G."/>
            <person name="Novella S."/>
            <person name="de Pablos B."/>
            <person name="Perez-Diaz J.-C."/>
            <person name="Purcell R."/>
            <person name="Remmel B."/>
            <person name="Rose M."/>
            <person name="Schlueter T."/>
            <person name="Simoes N."/>
            <person name="Tierrez A."/>
            <person name="Vazquez-Boland J.-A."/>
            <person name="Voss H."/>
            <person name="Wehland J."/>
            <person name="Cossart P."/>
        </authorList>
    </citation>
    <scope>NUCLEOTIDE SEQUENCE [LARGE SCALE GENOMIC DNA]</scope>
    <source>
        <strain>ATCC BAA-679 / EGD-e</strain>
    </source>
</reference>
<evidence type="ECO:0000255" key="1">
    <source>
        <dbReference type="HAMAP-Rule" id="MF_01400"/>
    </source>
</evidence>
<evidence type="ECO:0000255" key="2">
    <source>
        <dbReference type="PROSITE-ProRule" id="PRU01126"/>
    </source>
</evidence>
<name>MSRB_LISMO</name>
<comment type="catalytic activity">
    <reaction evidence="1">
        <text>L-methionyl-[protein] + [thioredoxin]-disulfide + H2O = L-methionyl-(R)-S-oxide-[protein] + [thioredoxin]-dithiol</text>
        <dbReference type="Rhea" id="RHEA:24164"/>
        <dbReference type="Rhea" id="RHEA-COMP:10698"/>
        <dbReference type="Rhea" id="RHEA-COMP:10700"/>
        <dbReference type="Rhea" id="RHEA-COMP:12313"/>
        <dbReference type="Rhea" id="RHEA-COMP:12314"/>
        <dbReference type="ChEBI" id="CHEBI:15377"/>
        <dbReference type="ChEBI" id="CHEBI:16044"/>
        <dbReference type="ChEBI" id="CHEBI:29950"/>
        <dbReference type="ChEBI" id="CHEBI:45764"/>
        <dbReference type="ChEBI" id="CHEBI:50058"/>
        <dbReference type="EC" id="1.8.4.12"/>
    </reaction>
</comment>
<comment type="similarity">
    <text evidence="1">Belongs to the MsrB Met sulfoxide reductase family.</text>
</comment>
<protein>
    <recommendedName>
        <fullName evidence="1">Peptide methionine sulfoxide reductase MsrB</fullName>
        <ecNumber evidence="1">1.8.4.12</ecNumber>
    </recommendedName>
    <alternativeName>
        <fullName evidence="1">Peptide-methionine (R)-S-oxide reductase</fullName>
    </alternativeName>
</protein>
<accession>Q8Y641</accession>
<gene>
    <name evidence="1" type="primary">msrB</name>
    <name type="ordered locus">lmo1859</name>
</gene>
<sequence length="145" mass="16521">MDESKKNERLQQLTDIQYNVTQKAGTERPFQNEFYDNEVKGIYVDIVSGKPLFSSNDQYDAGCGWPSFTKPIDEAEVIEHRDLTHGMIRTEVKSADADSHLGHVFPDGPQDKGGLRYCINSAALRFIPVDKLEEEGYQAYKKIFE</sequence>
<keyword id="KW-0560">Oxidoreductase</keyword>
<keyword id="KW-1185">Reference proteome</keyword>
<organism>
    <name type="scientific">Listeria monocytogenes serovar 1/2a (strain ATCC BAA-679 / EGD-e)</name>
    <dbReference type="NCBI Taxonomy" id="169963"/>
    <lineage>
        <taxon>Bacteria</taxon>
        <taxon>Bacillati</taxon>
        <taxon>Bacillota</taxon>
        <taxon>Bacilli</taxon>
        <taxon>Bacillales</taxon>
        <taxon>Listeriaceae</taxon>
        <taxon>Listeria</taxon>
    </lineage>
</organism>